<keyword id="KW-0165">Cleavage on pair of basic residues</keyword>
<keyword id="KW-0202">Cytokine</keyword>
<keyword id="KW-0217">Developmental protein</keyword>
<keyword id="KW-1015">Disulfide bond</keyword>
<keyword id="KW-0325">Glycoprotein</keyword>
<keyword id="KW-0339">Growth factor</keyword>
<keyword id="KW-1185">Reference proteome</keyword>
<keyword id="KW-0964">Secreted</keyword>
<keyword id="KW-0732">Signal</keyword>
<protein>
    <recommendedName>
        <fullName>Protein 60A</fullName>
    </recommendedName>
    <alternativeName>
        <fullName>Protein glass bottom boat</fullName>
    </alternativeName>
</protein>
<proteinExistence type="evidence at protein level"/>
<gene>
    <name type="primary">gbb</name>
    <name type="synonym">60A</name>
    <name type="synonym">gbb-60A</name>
    <name type="synonym">TGFb-60A</name>
    <name type="ORF">CG5562</name>
</gene>
<name>60A_DROME</name>
<accession>P27091</accession>
<accession>Q9W1I4</accession>
<dbReference type="EMBL" id="M77012">
    <property type="protein sequence ID" value="AAA28306.1"/>
    <property type="molecule type" value="Genomic_DNA"/>
</dbReference>
<dbReference type="EMBL" id="M84795">
    <property type="protein sequence ID" value="AAA28307.1"/>
    <property type="molecule type" value="mRNA"/>
</dbReference>
<dbReference type="EMBL" id="AE013599">
    <property type="protein sequence ID" value="AAF47075.1"/>
    <property type="molecule type" value="Genomic_DNA"/>
</dbReference>
<dbReference type="PIR" id="A43918">
    <property type="entry name" value="A43918"/>
</dbReference>
<dbReference type="RefSeq" id="NP_001286786.1">
    <property type="nucleotide sequence ID" value="NM_001299857.1"/>
</dbReference>
<dbReference type="RefSeq" id="NP_477340.1">
    <property type="nucleotide sequence ID" value="NM_057992.3"/>
</dbReference>
<dbReference type="SMR" id="P27091"/>
<dbReference type="BioGRID" id="63372">
    <property type="interactions" value="36"/>
</dbReference>
<dbReference type="DIP" id="DIP-19466N"/>
<dbReference type="FunCoup" id="P27091">
    <property type="interactions" value="143"/>
</dbReference>
<dbReference type="IntAct" id="P27091">
    <property type="interactions" value="3"/>
</dbReference>
<dbReference type="STRING" id="7227.FBpp0072036"/>
<dbReference type="GlyCosmos" id="P27091">
    <property type="glycosylation" value="3 sites, No reported glycans"/>
</dbReference>
<dbReference type="GlyGen" id="P27091">
    <property type="glycosylation" value="3 sites"/>
</dbReference>
<dbReference type="PaxDb" id="7227-FBpp0072036"/>
<dbReference type="EnsemblMetazoa" id="FBtr0072127">
    <property type="protein sequence ID" value="FBpp0072036"/>
    <property type="gene ID" value="FBgn0024234"/>
</dbReference>
<dbReference type="EnsemblMetazoa" id="FBtr0343274">
    <property type="protein sequence ID" value="FBpp0309939"/>
    <property type="gene ID" value="FBgn0024234"/>
</dbReference>
<dbReference type="GeneID" id="37778"/>
<dbReference type="KEGG" id="dme:Dmel_CG5562"/>
<dbReference type="AGR" id="FB:FBgn0024234"/>
<dbReference type="CTD" id="37778"/>
<dbReference type="FlyBase" id="FBgn0024234">
    <property type="gene designation" value="gbb"/>
</dbReference>
<dbReference type="VEuPathDB" id="VectorBase:FBgn0024234"/>
<dbReference type="eggNOG" id="KOG3900">
    <property type="taxonomic scope" value="Eukaryota"/>
</dbReference>
<dbReference type="GeneTree" id="ENSGT00940000167023"/>
<dbReference type="HOGENOM" id="CLU_020515_4_1_1"/>
<dbReference type="InParanoid" id="P27091"/>
<dbReference type="OMA" id="WLTANKQ"/>
<dbReference type="OrthoDB" id="5987191at2759"/>
<dbReference type="PhylomeDB" id="P27091"/>
<dbReference type="BioGRID-ORCS" id="37778">
    <property type="hits" value="0 hits in 3 CRISPR screens"/>
</dbReference>
<dbReference type="ChiTaRS" id="Gbeta13F">
    <property type="organism name" value="fly"/>
</dbReference>
<dbReference type="GenomeRNAi" id="37778"/>
<dbReference type="PRO" id="PR:P27091"/>
<dbReference type="Proteomes" id="UP000000803">
    <property type="component" value="Chromosome 2R"/>
</dbReference>
<dbReference type="Bgee" id="FBgn0024234">
    <property type="expression patterns" value="Expressed in interfollicle cell in ovary and 106 other cell types or tissues"/>
</dbReference>
<dbReference type="ExpressionAtlas" id="P27091">
    <property type="expression patterns" value="baseline and differential"/>
</dbReference>
<dbReference type="GO" id="GO:0031045">
    <property type="term" value="C:dense core granule"/>
    <property type="evidence" value="ECO:0000314"/>
    <property type="project" value="FlyBase"/>
</dbReference>
<dbReference type="GO" id="GO:0012505">
    <property type="term" value="C:endomembrane system"/>
    <property type="evidence" value="ECO:0007005"/>
    <property type="project" value="FlyBase"/>
</dbReference>
<dbReference type="GO" id="GO:0005615">
    <property type="term" value="C:extracellular space"/>
    <property type="evidence" value="ECO:0000314"/>
    <property type="project" value="FlyBase"/>
</dbReference>
<dbReference type="GO" id="GO:0045202">
    <property type="term" value="C:synapse"/>
    <property type="evidence" value="ECO:0007669"/>
    <property type="project" value="GOC"/>
</dbReference>
<dbReference type="GO" id="GO:0005125">
    <property type="term" value="F:cytokine activity"/>
    <property type="evidence" value="ECO:0000318"/>
    <property type="project" value="GO_Central"/>
</dbReference>
<dbReference type="GO" id="GO:0008083">
    <property type="term" value="F:growth factor activity"/>
    <property type="evidence" value="ECO:0007669"/>
    <property type="project" value="UniProtKB-KW"/>
</dbReference>
<dbReference type="GO" id="GO:0016015">
    <property type="term" value="F:morphogen activity"/>
    <property type="evidence" value="ECO:0000315"/>
    <property type="project" value="FlyBase"/>
</dbReference>
<dbReference type="GO" id="GO:0046982">
    <property type="term" value="F:protein heterodimerization activity"/>
    <property type="evidence" value="ECO:0000353"/>
    <property type="project" value="FlyBase"/>
</dbReference>
<dbReference type="GO" id="GO:0048018">
    <property type="term" value="F:receptor ligand activity"/>
    <property type="evidence" value="ECO:0000314"/>
    <property type="project" value="FlyBase"/>
</dbReference>
<dbReference type="GO" id="GO:0005160">
    <property type="term" value="F:transforming growth factor beta receptor binding"/>
    <property type="evidence" value="ECO:0000250"/>
    <property type="project" value="FlyBase"/>
</dbReference>
<dbReference type="GO" id="GO:0030509">
    <property type="term" value="P:BMP signaling pathway"/>
    <property type="evidence" value="ECO:0000314"/>
    <property type="project" value="FlyBase"/>
</dbReference>
<dbReference type="GO" id="GO:0007391">
    <property type="term" value="P:dorsal closure"/>
    <property type="evidence" value="ECO:0000304"/>
    <property type="project" value="FlyBase"/>
</dbReference>
<dbReference type="GO" id="GO:0048557">
    <property type="term" value="P:embryonic digestive tract morphogenesis"/>
    <property type="evidence" value="ECO:0000315"/>
    <property type="project" value="FlyBase"/>
</dbReference>
<dbReference type="GO" id="GO:0036099">
    <property type="term" value="P:female germ-line stem cell population maintenance"/>
    <property type="evidence" value="ECO:0000315"/>
    <property type="project" value="FlyBase"/>
</dbReference>
<dbReference type="GO" id="GO:0030707">
    <property type="term" value="P:follicle cell of egg chamber development"/>
    <property type="evidence" value="ECO:0000315"/>
    <property type="project" value="FlyBase"/>
</dbReference>
<dbReference type="GO" id="GO:0008586">
    <property type="term" value="P:imaginal disc-derived wing vein morphogenesis"/>
    <property type="evidence" value="ECO:0000315"/>
    <property type="project" value="FlyBase"/>
</dbReference>
<dbReference type="GO" id="GO:0007474">
    <property type="term" value="P:imaginal disc-derived wing vein specification"/>
    <property type="evidence" value="ECO:0000315"/>
    <property type="project" value="FlyBase"/>
</dbReference>
<dbReference type="GO" id="GO:0007504">
    <property type="term" value="P:larval fat body development"/>
    <property type="evidence" value="ECO:0000315"/>
    <property type="project" value="FlyBase"/>
</dbReference>
<dbReference type="GO" id="GO:0099558">
    <property type="term" value="P:maintenance of synapse structure"/>
    <property type="evidence" value="ECO:0000316"/>
    <property type="project" value="FlyBase"/>
</dbReference>
<dbReference type="GO" id="GO:0007528">
    <property type="term" value="P:neuromuscular junction development"/>
    <property type="evidence" value="ECO:0000315"/>
    <property type="project" value="FlyBase"/>
</dbReference>
<dbReference type="GO" id="GO:0007274">
    <property type="term" value="P:neuromuscular synaptic transmission"/>
    <property type="evidence" value="ECO:0000315"/>
    <property type="project" value="FlyBase"/>
</dbReference>
<dbReference type="GO" id="GO:0048636">
    <property type="term" value="P:positive regulation of muscle organ development"/>
    <property type="evidence" value="ECO:0000316"/>
    <property type="project" value="FlyBase"/>
</dbReference>
<dbReference type="GO" id="GO:0045887">
    <property type="term" value="P:positive regulation of synaptic assembly at neuromuscular junction"/>
    <property type="evidence" value="ECO:0000315"/>
    <property type="project" value="FlyBase"/>
</dbReference>
<dbReference type="GO" id="GO:0050806">
    <property type="term" value="P:positive regulation of synaptic transmission"/>
    <property type="evidence" value="ECO:0000315"/>
    <property type="project" value="FlyBase"/>
</dbReference>
<dbReference type="GO" id="GO:0045464">
    <property type="term" value="P:R8 cell fate specification"/>
    <property type="evidence" value="ECO:0000315"/>
    <property type="project" value="FlyBase"/>
</dbReference>
<dbReference type="GO" id="GO:0046928">
    <property type="term" value="P:regulation of neurotransmitter secretion"/>
    <property type="evidence" value="ECO:0000314"/>
    <property type="project" value="FlyBase"/>
</dbReference>
<dbReference type="GO" id="GO:2000736">
    <property type="term" value="P:regulation of stem cell differentiation"/>
    <property type="evidence" value="ECO:0000316"/>
    <property type="project" value="FlyBase"/>
</dbReference>
<dbReference type="GO" id="GO:0098917">
    <property type="term" value="P:retrograde trans-synaptic signaling"/>
    <property type="evidence" value="ECO:0000316"/>
    <property type="project" value="FlyBase"/>
</dbReference>
<dbReference type="GO" id="GO:0007419">
    <property type="term" value="P:ventral cord development"/>
    <property type="evidence" value="ECO:0007001"/>
    <property type="project" value="FlyBase"/>
</dbReference>
<dbReference type="GO" id="GO:0035222">
    <property type="term" value="P:wing disc pattern formation"/>
    <property type="evidence" value="ECO:0000315"/>
    <property type="project" value="FlyBase"/>
</dbReference>
<dbReference type="CDD" id="cd13761">
    <property type="entry name" value="TGF_beta_BMP5_like"/>
    <property type="match status" value="1"/>
</dbReference>
<dbReference type="FunFam" id="2.10.90.10:FF:000003">
    <property type="entry name" value="Bone morphogenetic protein 5"/>
    <property type="match status" value="1"/>
</dbReference>
<dbReference type="FunFam" id="2.60.120.970:FF:000030">
    <property type="entry name" value="Glass bottom boat"/>
    <property type="match status" value="1"/>
</dbReference>
<dbReference type="Gene3D" id="2.60.120.970">
    <property type="match status" value="1"/>
</dbReference>
<dbReference type="Gene3D" id="2.10.90.10">
    <property type="entry name" value="Cystine-knot cytokines"/>
    <property type="match status" value="1"/>
</dbReference>
<dbReference type="InterPro" id="IPR029034">
    <property type="entry name" value="Cystine-knot_cytokine"/>
</dbReference>
<dbReference type="InterPro" id="IPR001839">
    <property type="entry name" value="TGF-b_C"/>
</dbReference>
<dbReference type="InterPro" id="IPR001111">
    <property type="entry name" value="TGF-b_propeptide"/>
</dbReference>
<dbReference type="InterPro" id="IPR015615">
    <property type="entry name" value="TGF-beta-rel"/>
</dbReference>
<dbReference type="InterPro" id="IPR017948">
    <property type="entry name" value="TGFb_CS"/>
</dbReference>
<dbReference type="PANTHER" id="PTHR11848:SF310">
    <property type="entry name" value="PROTEIN 60A-RELATED"/>
    <property type="match status" value="1"/>
</dbReference>
<dbReference type="PANTHER" id="PTHR11848">
    <property type="entry name" value="TGF-BETA FAMILY"/>
    <property type="match status" value="1"/>
</dbReference>
<dbReference type="Pfam" id="PF00019">
    <property type="entry name" value="TGF_beta"/>
    <property type="match status" value="1"/>
</dbReference>
<dbReference type="Pfam" id="PF00688">
    <property type="entry name" value="TGFb_propeptide"/>
    <property type="match status" value="1"/>
</dbReference>
<dbReference type="SMART" id="SM00204">
    <property type="entry name" value="TGFB"/>
    <property type="match status" value="1"/>
</dbReference>
<dbReference type="SUPFAM" id="SSF57501">
    <property type="entry name" value="Cystine-knot cytokines"/>
    <property type="match status" value="1"/>
</dbReference>
<dbReference type="PROSITE" id="PS00250">
    <property type="entry name" value="TGF_BETA_1"/>
    <property type="match status" value="1"/>
</dbReference>
<dbReference type="PROSITE" id="PS51362">
    <property type="entry name" value="TGF_BETA_2"/>
    <property type="match status" value="1"/>
</dbReference>
<reference key="1">
    <citation type="journal article" date="1991" name="Proc. Natl. Acad. Sci. U.S.A.">
        <title>Drosophila 60A gene, another transforming growth factor beta family member, is closely related to human bone morphogenetic proteins.</title>
        <authorList>
            <person name="Wharton K.A."/>
            <person name="Thomsen G.H."/>
            <person name="Gelbart W.M."/>
        </authorList>
    </citation>
    <scope>NUCLEOTIDE SEQUENCE [GENOMIC DNA]</scope>
    <scope>DEVELOPMENTAL STAGE</scope>
</reference>
<reference key="2">
    <citation type="journal article" date="1992" name="Dev. Biol.">
        <title>Sequence, biochemical characterization, and developmental expression of a new member of the TGF-beta superfamily in Drosophila melanogaster.</title>
        <authorList>
            <person name="Doctor J.S."/>
            <person name="Jackson P.D."/>
            <person name="Rashka K.E."/>
            <person name="Visalli M."/>
            <person name="Hoffmann F.M."/>
        </authorList>
    </citation>
    <scope>NUCLEOTIDE SEQUENCE [MRNA]</scope>
    <scope>SUBUNIT</scope>
    <scope>SUBCELLULAR LOCATION</scope>
    <scope>TISSUE SPECIFICITY</scope>
    <scope>DEVELOPMENTAL STAGE</scope>
</reference>
<reference key="3">
    <citation type="journal article" date="2000" name="Science">
        <title>The genome sequence of Drosophila melanogaster.</title>
        <authorList>
            <person name="Adams M.D."/>
            <person name="Celniker S.E."/>
            <person name="Holt R.A."/>
            <person name="Evans C.A."/>
            <person name="Gocayne J.D."/>
            <person name="Amanatides P.G."/>
            <person name="Scherer S.E."/>
            <person name="Li P.W."/>
            <person name="Hoskins R.A."/>
            <person name="Galle R.F."/>
            <person name="George R.A."/>
            <person name="Lewis S.E."/>
            <person name="Richards S."/>
            <person name="Ashburner M."/>
            <person name="Henderson S.N."/>
            <person name="Sutton G.G."/>
            <person name="Wortman J.R."/>
            <person name="Yandell M.D."/>
            <person name="Zhang Q."/>
            <person name="Chen L.X."/>
            <person name="Brandon R.C."/>
            <person name="Rogers Y.-H.C."/>
            <person name="Blazej R.G."/>
            <person name="Champe M."/>
            <person name="Pfeiffer B.D."/>
            <person name="Wan K.H."/>
            <person name="Doyle C."/>
            <person name="Baxter E.G."/>
            <person name="Helt G."/>
            <person name="Nelson C.R."/>
            <person name="Miklos G.L.G."/>
            <person name="Abril J.F."/>
            <person name="Agbayani A."/>
            <person name="An H.-J."/>
            <person name="Andrews-Pfannkoch C."/>
            <person name="Baldwin D."/>
            <person name="Ballew R.M."/>
            <person name="Basu A."/>
            <person name="Baxendale J."/>
            <person name="Bayraktaroglu L."/>
            <person name="Beasley E.M."/>
            <person name="Beeson K.Y."/>
            <person name="Benos P.V."/>
            <person name="Berman B.P."/>
            <person name="Bhandari D."/>
            <person name="Bolshakov S."/>
            <person name="Borkova D."/>
            <person name="Botchan M.R."/>
            <person name="Bouck J."/>
            <person name="Brokstein P."/>
            <person name="Brottier P."/>
            <person name="Burtis K.C."/>
            <person name="Busam D.A."/>
            <person name="Butler H."/>
            <person name="Cadieu E."/>
            <person name="Center A."/>
            <person name="Chandra I."/>
            <person name="Cherry J.M."/>
            <person name="Cawley S."/>
            <person name="Dahlke C."/>
            <person name="Davenport L.B."/>
            <person name="Davies P."/>
            <person name="de Pablos B."/>
            <person name="Delcher A."/>
            <person name="Deng Z."/>
            <person name="Mays A.D."/>
            <person name="Dew I."/>
            <person name="Dietz S.M."/>
            <person name="Dodson K."/>
            <person name="Doup L.E."/>
            <person name="Downes M."/>
            <person name="Dugan-Rocha S."/>
            <person name="Dunkov B.C."/>
            <person name="Dunn P."/>
            <person name="Durbin K.J."/>
            <person name="Evangelista C.C."/>
            <person name="Ferraz C."/>
            <person name="Ferriera S."/>
            <person name="Fleischmann W."/>
            <person name="Fosler C."/>
            <person name="Gabrielian A.E."/>
            <person name="Garg N.S."/>
            <person name="Gelbart W.M."/>
            <person name="Glasser K."/>
            <person name="Glodek A."/>
            <person name="Gong F."/>
            <person name="Gorrell J.H."/>
            <person name="Gu Z."/>
            <person name="Guan P."/>
            <person name="Harris M."/>
            <person name="Harris N.L."/>
            <person name="Harvey D.A."/>
            <person name="Heiman T.J."/>
            <person name="Hernandez J.R."/>
            <person name="Houck J."/>
            <person name="Hostin D."/>
            <person name="Houston K.A."/>
            <person name="Howland T.J."/>
            <person name="Wei M.-H."/>
            <person name="Ibegwam C."/>
            <person name="Jalali M."/>
            <person name="Kalush F."/>
            <person name="Karpen G.H."/>
            <person name="Ke Z."/>
            <person name="Kennison J.A."/>
            <person name="Ketchum K.A."/>
            <person name="Kimmel B.E."/>
            <person name="Kodira C.D."/>
            <person name="Kraft C.L."/>
            <person name="Kravitz S."/>
            <person name="Kulp D."/>
            <person name="Lai Z."/>
            <person name="Lasko P."/>
            <person name="Lei Y."/>
            <person name="Levitsky A.A."/>
            <person name="Li J.H."/>
            <person name="Li Z."/>
            <person name="Liang Y."/>
            <person name="Lin X."/>
            <person name="Liu X."/>
            <person name="Mattei B."/>
            <person name="McIntosh T.C."/>
            <person name="McLeod M.P."/>
            <person name="McPherson D."/>
            <person name="Merkulov G."/>
            <person name="Milshina N.V."/>
            <person name="Mobarry C."/>
            <person name="Morris J."/>
            <person name="Moshrefi A."/>
            <person name="Mount S.M."/>
            <person name="Moy M."/>
            <person name="Murphy B."/>
            <person name="Murphy L."/>
            <person name="Muzny D.M."/>
            <person name="Nelson D.L."/>
            <person name="Nelson D.R."/>
            <person name="Nelson K.A."/>
            <person name="Nixon K."/>
            <person name="Nusskern D.R."/>
            <person name="Pacleb J.M."/>
            <person name="Palazzolo M."/>
            <person name="Pittman G.S."/>
            <person name="Pan S."/>
            <person name="Pollard J."/>
            <person name="Puri V."/>
            <person name="Reese M.G."/>
            <person name="Reinert K."/>
            <person name="Remington K."/>
            <person name="Saunders R.D.C."/>
            <person name="Scheeler F."/>
            <person name="Shen H."/>
            <person name="Shue B.C."/>
            <person name="Siden-Kiamos I."/>
            <person name="Simpson M."/>
            <person name="Skupski M.P."/>
            <person name="Smith T.J."/>
            <person name="Spier E."/>
            <person name="Spradling A.C."/>
            <person name="Stapleton M."/>
            <person name="Strong R."/>
            <person name="Sun E."/>
            <person name="Svirskas R."/>
            <person name="Tector C."/>
            <person name="Turner R."/>
            <person name="Venter E."/>
            <person name="Wang A.H."/>
            <person name="Wang X."/>
            <person name="Wang Z.-Y."/>
            <person name="Wassarman D.A."/>
            <person name="Weinstock G.M."/>
            <person name="Weissenbach J."/>
            <person name="Williams S.M."/>
            <person name="Woodage T."/>
            <person name="Worley K.C."/>
            <person name="Wu D."/>
            <person name="Yang S."/>
            <person name="Yao Q.A."/>
            <person name="Ye J."/>
            <person name="Yeh R.-F."/>
            <person name="Zaveri J.S."/>
            <person name="Zhan M."/>
            <person name="Zhang G."/>
            <person name="Zhao Q."/>
            <person name="Zheng L."/>
            <person name="Zheng X.H."/>
            <person name="Zhong F.N."/>
            <person name="Zhong W."/>
            <person name="Zhou X."/>
            <person name="Zhu S.C."/>
            <person name="Zhu X."/>
            <person name="Smith H.O."/>
            <person name="Gibbs R.A."/>
            <person name="Myers E.W."/>
            <person name="Rubin G.M."/>
            <person name="Venter J.C."/>
        </authorList>
    </citation>
    <scope>NUCLEOTIDE SEQUENCE [LARGE SCALE GENOMIC DNA]</scope>
    <source>
        <strain>Berkeley</strain>
    </source>
</reference>
<reference key="4">
    <citation type="journal article" date="2002" name="Genome Biol.">
        <title>Annotation of the Drosophila melanogaster euchromatic genome: a systematic review.</title>
        <authorList>
            <person name="Misra S."/>
            <person name="Crosby M.A."/>
            <person name="Mungall C.J."/>
            <person name="Matthews B.B."/>
            <person name="Campbell K.S."/>
            <person name="Hradecky P."/>
            <person name="Huang Y."/>
            <person name="Kaminker J.S."/>
            <person name="Millburn G.H."/>
            <person name="Prochnik S.E."/>
            <person name="Smith C.D."/>
            <person name="Tupy J.L."/>
            <person name="Whitfield E.J."/>
            <person name="Bayraktaroglu L."/>
            <person name="Berman B.P."/>
            <person name="Bettencourt B.R."/>
            <person name="Celniker S.E."/>
            <person name="de Grey A.D.N.J."/>
            <person name="Drysdale R.A."/>
            <person name="Harris N.L."/>
            <person name="Richter J."/>
            <person name="Russo S."/>
            <person name="Schroeder A.J."/>
            <person name="Shu S.Q."/>
            <person name="Stapleton M."/>
            <person name="Yamada C."/>
            <person name="Ashburner M."/>
            <person name="Gelbart W.M."/>
            <person name="Rubin G.M."/>
            <person name="Lewis S.E."/>
        </authorList>
    </citation>
    <scope>GENOME REANNOTATION</scope>
    <source>
        <strain>Berkeley</strain>
    </source>
</reference>
<reference key="5">
    <citation type="journal article" date="1998" name="Development">
        <title>TGF-beta/BMP superfamily members, Gbb-60A and Dpp, cooperate to provide pattern information and establish cell identity in the Drosophila wing.</title>
        <authorList>
            <person name="Khalsa O."/>
            <person name="Yoon J.-W."/>
            <person name="Torres-Schumann S."/>
            <person name="Wharton K.A."/>
        </authorList>
    </citation>
    <scope>FUNCTION</scope>
    <scope>TISSUE SPECIFICITY</scope>
    <scope>DISRUPTION PHENOTYPE</scope>
</reference>
<reference key="6">
    <citation type="journal article" date="2022" name="Elife">
        <title>The NDNF-like factor Nord is a Hedgehog-induced extracellular BMP modulator that regulates Drosophila wing patterning and growth.</title>
        <authorList>
            <person name="Yang S."/>
            <person name="Wu X."/>
            <person name="Daoutidou E.I."/>
            <person name="Zhang Y."/>
            <person name="Shimell M."/>
            <person name="Chuang K.H."/>
            <person name="Peterson A.J."/>
            <person name="O'Connor M.B."/>
            <person name="Zheng X."/>
        </authorList>
    </citation>
    <scope>INTERACTION WITH NORD AND DPP</scope>
</reference>
<sequence length="455" mass="51687">MSGLRNTSEAVAVLASLGLGMVLLMFVATTPPAVEATQSGIYIDNGKDQTIMHRVLSEDDKLDVSYEILEFLGIAERPTHLSSHQLSLRKSAPKFLLDVYHRITAEEGLSDQDEDDDYERGHRSRRSADLEEDEGEQQKNFITDLDKRAIDESDIIMTFLNKRHHNVDELRHEHGRRLWFDVSNVPNDNYLVMAELRIYQNANEGKWLTANREFTITVYAIGTGTLGQHTMEPLSSVNTTGDYVGWLELNVTEGLHEWLVKSKDNHGIYIGAHAVNRPDREVKLDDIGLIHRKVDDEFQPFMIGFFRGPELIKATAHSSHHRSKRSASHPRKRKKSVSPNNVPLLEPMESTRSCQMQTLYIDFKDLGWHDWIIAPEGYGAFYCSGECNFPLNAHMNATNHAIVQTLVHLLEPKKVPKPCCAPTRLGALPVLYHLNDENVNLKKYRNMIVKSCGCH</sequence>
<organism>
    <name type="scientific">Drosophila melanogaster</name>
    <name type="common">Fruit fly</name>
    <dbReference type="NCBI Taxonomy" id="7227"/>
    <lineage>
        <taxon>Eukaryota</taxon>
        <taxon>Metazoa</taxon>
        <taxon>Ecdysozoa</taxon>
        <taxon>Arthropoda</taxon>
        <taxon>Hexapoda</taxon>
        <taxon>Insecta</taxon>
        <taxon>Pterygota</taxon>
        <taxon>Neoptera</taxon>
        <taxon>Endopterygota</taxon>
        <taxon>Diptera</taxon>
        <taxon>Brachycera</taxon>
        <taxon>Muscomorpha</taxon>
        <taxon>Ephydroidea</taxon>
        <taxon>Drosophilidae</taxon>
        <taxon>Drosophila</taxon>
        <taxon>Sophophora</taxon>
    </lineage>
</organism>
<comment type="function">
    <text evidence="7">Required for the growth of imaginal tissues and for patterning of the adult wing.</text>
</comment>
<comment type="subunit">
    <text evidence="4 6">Homodimer; disulfide-linked (PubMed:1601181). Interacts with nord and dpp (PubMed:35037619).</text>
</comment>
<comment type="subcellular location">
    <subcellularLocation>
        <location evidence="4">Secreted</location>
    </subcellularLocation>
</comment>
<comment type="tissue specificity">
    <text evidence="4 7">Expressed in cells of the developing foregut and hindgut during germ band retraction and later embryonic stages. Expressed in the wing disk, mainly in the posterior compartment in the pteropleural and medial regions extending into the progenitors of the scutellum. High levels are found within the posterior and anterior compartments of the wing pouch and low levels in the hinge region. In the eye/antennal disk, expression is highest anterior to the morphogenetic furrow and in the medial regions with lower levels of expression posterior to the morphogenetic furrow. Expressed throughout the posterior compartment of the leg imaginal disks and within the ventral anterior compartment.</text>
</comment>
<comment type="developmental stage">
    <text evidence="4 5">Expressed throughout development with peaks of transcription during early embryogenesis, in pupae, and in adult males.</text>
</comment>
<comment type="disruption phenotype">
    <text evidence="7">Flies exhibit transparent larvae, and a reduction of the adult wing size.</text>
</comment>
<comment type="similarity">
    <text evidence="8">Belongs to the TGF-beta family.</text>
</comment>
<feature type="signal peptide" evidence="2">
    <location>
        <begin position="1"/>
        <end position="36"/>
    </location>
</feature>
<feature type="propeptide" id="PRO_0000033660" evidence="2">
    <location>
        <begin position="37"/>
        <end position="335"/>
    </location>
</feature>
<feature type="chain" id="PRO_0000033661" description="Protein 60A">
    <location>
        <begin position="336"/>
        <end position="455"/>
    </location>
</feature>
<feature type="region of interest" description="Disordered" evidence="3">
    <location>
        <begin position="108"/>
        <end position="138"/>
    </location>
</feature>
<feature type="region of interest" description="Disordered" evidence="3">
    <location>
        <begin position="316"/>
        <end position="345"/>
    </location>
</feature>
<feature type="compositionally biased region" description="Acidic residues" evidence="3">
    <location>
        <begin position="108"/>
        <end position="118"/>
    </location>
</feature>
<feature type="compositionally biased region" description="Basic residues" evidence="3">
    <location>
        <begin position="318"/>
        <end position="336"/>
    </location>
</feature>
<feature type="glycosylation site" description="N-linked (GlcNAc...) asparagine" evidence="2">
    <location>
        <position position="238"/>
    </location>
</feature>
<feature type="glycosylation site" description="N-linked (GlcNAc...) asparagine" evidence="2">
    <location>
        <position position="250"/>
    </location>
</feature>
<feature type="glycosylation site" description="N-linked (GlcNAc...) asparagine" evidence="2">
    <location>
        <position position="396"/>
    </location>
</feature>
<feature type="disulfide bond" evidence="1">
    <location>
        <begin position="354"/>
        <end position="420"/>
    </location>
</feature>
<feature type="disulfide bond" evidence="1">
    <location>
        <begin position="383"/>
        <end position="452"/>
    </location>
</feature>
<feature type="disulfide bond" evidence="1">
    <location>
        <begin position="387"/>
        <end position="454"/>
    </location>
</feature>
<feature type="disulfide bond" description="Interchain" evidence="1">
    <location>
        <position position="419"/>
    </location>
</feature>
<evidence type="ECO:0000250" key="1"/>
<evidence type="ECO:0000255" key="2"/>
<evidence type="ECO:0000256" key="3">
    <source>
        <dbReference type="SAM" id="MobiDB-lite"/>
    </source>
</evidence>
<evidence type="ECO:0000269" key="4">
    <source>
    </source>
</evidence>
<evidence type="ECO:0000269" key="5">
    <source>
    </source>
</evidence>
<evidence type="ECO:0000269" key="6">
    <source>
    </source>
</evidence>
<evidence type="ECO:0000269" key="7">
    <source>
    </source>
</evidence>
<evidence type="ECO:0000305" key="8"/>